<evidence type="ECO:0000255" key="1">
    <source>
        <dbReference type="HAMAP-Rule" id="MF_00061"/>
    </source>
</evidence>
<organism>
    <name type="scientific">Synechococcus sp. (strain CC9902)</name>
    <dbReference type="NCBI Taxonomy" id="316279"/>
    <lineage>
        <taxon>Bacteria</taxon>
        <taxon>Bacillati</taxon>
        <taxon>Cyanobacteriota</taxon>
        <taxon>Cyanophyceae</taxon>
        <taxon>Synechococcales</taxon>
        <taxon>Synechococcaceae</taxon>
        <taxon>Synechococcus</taxon>
    </lineage>
</organism>
<accession>Q3AXF4</accession>
<sequence>MLTVTAPAKVNLHLEVLGLRSDGFHELAMVMQSIDLADSLQFTNTADAQITLRCDDSSLSTGADNLVLKAAELLRARSGFNELGVSMYLEKRIPIGAGLAGGSSDGAAALVGLNALWGLGYTAEALESMAAELGSDMPFCVAGGTQLCFGRGELLEPVPPTAEGLAVLLVKDPLVSVSTPWAYQRCKELKGKNYLEGEVAFEQRRRDLREAPWLQPLRAGCPPPLRNDLQVVVAAETQAVQVSLQLLQTLPTPLAVAMSGSGPSCFALFGDQDQCDQAAADLSPKLKAAGLKAWACSLRSDGVRIAS</sequence>
<comment type="function">
    <text evidence="1">Catalyzes the phosphorylation of the position 2 hydroxy group of 4-diphosphocytidyl-2C-methyl-D-erythritol.</text>
</comment>
<comment type="catalytic activity">
    <reaction evidence="1">
        <text>4-CDP-2-C-methyl-D-erythritol + ATP = 4-CDP-2-C-methyl-D-erythritol 2-phosphate + ADP + H(+)</text>
        <dbReference type="Rhea" id="RHEA:18437"/>
        <dbReference type="ChEBI" id="CHEBI:15378"/>
        <dbReference type="ChEBI" id="CHEBI:30616"/>
        <dbReference type="ChEBI" id="CHEBI:57823"/>
        <dbReference type="ChEBI" id="CHEBI:57919"/>
        <dbReference type="ChEBI" id="CHEBI:456216"/>
        <dbReference type="EC" id="2.7.1.148"/>
    </reaction>
</comment>
<comment type="pathway">
    <text evidence="1">Isoprenoid biosynthesis; isopentenyl diphosphate biosynthesis via DXP pathway; isopentenyl diphosphate from 1-deoxy-D-xylulose 5-phosphate: step 3/6.</text>
</comment>
<comment type="similarity">
    <text evidence="1">Belongs to the GHMP kinase family. IspE subfamily.</text>
</comment>
<gene>
    <name evidence="1" type="primary">ispE</name>
    <name type="ordered locus">Syncc9902_1282</name>
</gene>
<feature type="chain" id="PRO_0000235141" description="4-diphosphocytidyl-2-C-methyl-D-erythritol kinase">
    <location>
        <begin position="1"/>
        <end position="307"/>
    </location>
</feature>
<feature type="active site" evidence="1">
    <location>
        <position position="9"/>
    </location>
</feature>
<feature type="active site" evidence="1">
    <location>
        <position position="136"/>
    </location>
</feature>
<feature type="binding site" evidence="1">
    <location>
        <begin position="94"/>
        <end position="104"/>
    </location>
    <ligand>
        <name>ATP</name>
        <dbReference type="ChEBI" id="CHEBI:30616"/>
    </ligand>
</feature>
<protein>
    <recommendedName>
        <fullName evidence="1">4-diphosphocytidyl-2-C-methyl-D-erythritol kinase</fullName>
        <shortName evidence="1">CMK</shortName>
        <ecNumber evidence="1">2.7.1.148</ecNumber>
    </recommendedName>
    <alternativeName>
        <fullName evidence="1">4-(cytidine-5'-diphospho)-2-C-methyl-D-erythritol kinase</fullName>
    </alternativeName>
</protein>
<dbReference type="EC" id="2.7.1.148" evidence="1"/>
<dbReference type="EMBL" id="CP000097">
    <property type="protein sequence ID" value="ABB26246.1"/>
    <property type="molecule type" value="Genomic_DNA"/>
</dbReference>
<dbReference type="RefSeq" id="WP_011360071.1">
    <property type="nucleotide sequence ID" value="NC_007513.1"/>
</dbReference>
<dbReference type="SMR" id="Q3AXF4"/>
<dbReference type="STRING" id="316279.Syncc9902_1282"/>
<dbReference type="KEGG" id="sye:Syncc9902_1282"/>
<dbReference type="eggNOG" id="COG1947">
    <property type="taxonomic scope" value="Bacteria"/>
</dbReference>
<dbReference type="HOGENOM" id="CLU_053057_1_1_3"/>
<dbReference type="OrthoDB" id="9809438at2"/>
<dbReference type="UniPathway" id="UPA00056">
    <property type="reaction ID" value="UER00094"/>
</dbReference>
<dbReference type="Proteomes" id="UP000002712">
    <property type="component" value="Chromosome"/>
</dbReference>
<dbReference type="GO" id="GO:0050515">
    <property type="term" value="F:4-(cytidine 5'-diphospho)-2-C-methyl-D-erythritol kinase activity"/>
    <property type="evidence" value="ECO:0007669"/>
    <property type="project" value="UniProtKB-UniRule"/>
</dbReference>
<dbReference type="GO" id="GO:0005524">
    <property type="term" value="F:ATP binding"/>
    <property type="evidence" value="ECO:0007669"/>
    <property type="project" value="UniProtKB-UniRule"/>
</dbReference>
<dbReference type="GO" id="GO:0019288">
    <property type="term" value="P:isopentenyl diphosphate biosynthetic process, methylerythritol 4-phosphate pathway"/>
    <property type="evidence" value="ECO:0007669"/>
    <property type="project" value="UniProtKB-UniRule"/>
</dbReference>
<dbReference type="GO" id="GO:0016114">
    <property type="term" value="P:terpenoid biosynthetic process"/>
    <property type="evidence" value="ECO:0007669"/>
    <property type="project" value="InterPro"/>
</dbReference>
<dbReference type="Gene3D" id="3.30.230.10">
    <property type="match status" value="1"/>
</dbReference>
<dbReference type="Gene3D" id="3.30.70.890">
    <property type="entry name" value="GHMP kinase, C-terminal domain"/>
    <property type="match status" value="1"/>
</dbReference>
<dbReference type="HAMAP" id="MF_00061">
    <property type="entry name" value="IspE"/>
    <property type="match status" value="1"/>
</dbReference>
<dbReference type="InterPro" id="IPR013750">
    <property type="entry name" value="GHMP_kinase_C_dom"/>
</dbReference>
<dbReference type="InterPro" id="IPR036554">
    <property type="entry name" value="GHMP_kinase_C_sf"/>
</dbReference>
<dbReference type="InterPro" id="IPR006204">
    <property type="entry name" value="GHMP_kinase_N_dom"/>
</dbReference>
<dbReference type="InterPro" id="IPR004424">
    <property type="entry name" value="IspE"/>
</dbReference>
<dbReference type="InterPro" id="IPR020568">
    <property type="entry name" value="Ribosomal_Su5_D2-typ_SF"/>
</dbReference>
<dbReference type="InterPro" id="IPR014721">
    <property type="entry name" value="Ribsml_uS5_D2-typ_fold_subgr"/>
</dbReference>
<dbReference type="NCBIfam" id="TIGR00154">
    <property type="entry name" value="ispE"/>
    <property type="match status" value="1"/>
</dbReference>
<dbReference type="PANTHER" id="PTHR43527">
    <property type="entry name" value="4-DIPHOSPHOCYTIDYL-2-C-METHYL-D-ERYTHRITOL KINASE, CHLOROPLASTIC"/>
    <property type="match status" value="1"/>
</dbReference>
<dbReference type="PANTHER" id="PTHR43527:SF2">
    <property type="entry name" value="4-DIPHOSPHOCYTIDYL-2-C-METHYL-D-ERYTHRITOL KINASE, CHLOROPLASTIC"/>
    <property type="match status" value="1"/>
</dbReference>
<dbReference type="Pfam" id="PF08544">
    <property type="entry name" value="GHMP_kinases_C"/>
    <property type="match status" value="1"/>
</dbReference>
<dbReference type="Pfam" id="PF00288">
    <property type="entry name" value="GHMP_kinases_N"/>
    <property type="match status" value="1"/>
</dbReference>
<dbReference type="PIRSF" id="PIRSF010376">
    <property type="entry name" value="IspE"/>
    <property type="match status" value="1"/>
</dbReference>
<dbReference type="SUPFAM" id="SSF55060">
    <property type="entry name" value="GHMP Kinase, C-terminal domain"/>
    <property type="match status" value="1"/>
</dbReference>
<dbReference type="SUPFAM" id="SSF54211">
    <property type="entry name" value="Ribosomal protein S5 domain 2-like"/>
    <property type="match status" value="1"/>
</dbReference>
<proteinExistence type="inferred from homology"/>
<name>ISPE_SYNS9</name>
<reference key="1">
    <citation type="submission" date="2005-08" db="EMBL/GenBank/DDBJ databases">
        <title>Complete sequence of Synechococcus sp. CC9902.</title>
        <authorList>
            <person name="Copeland A."/>
            <person name="Lucas S."/>
            <person name="Lapidus A."/>
            <person name="Barry K."/>
            <person name="Detter J.C."/>
            <person name="Glavina T."/>
            <person name="Hammon N."/>
            <person name="Israni S."/>
            <person name="Pitluck S."/>
            <person name="Martinez M."/>
            <person name="Schmutz J."/>
            <person name="Larimer F."/>
            <person name="Land M."/>
            <person name="Kyrpides N."/>
            <person name="Ivanova N."/>
            <person name="Richardson P."/>
        </authorList>
    </citation>
    <scope>NUCLEOTIDE SEQUENCE [LARGE SCALE GENOMIC DNA]</scope>
    <source>
        <strain>CC9902</strain>
    </source>
</reference>
<keyword id="KW-0067">ATP-binding</keyword>
<keyword id="KW-0414">Isoprene biosynthesis</keyword>
<keyword id="KW-0418">Kinase</keyword>
<keyword id="KW-0547">Nucleotide-binding</keyword>
<keyword id="KW-1185">Reference proteome</keyword>
<keyword id="KW-0808">Transferase</keyword>